<accession>Q9TLQ8</accession>
<geneLocation type="chloroplast"/>
<reference key="1">
    <citation type="journal article" date="2000" name="J. Mol. Evol.">
        <title>The structure and gene repertoire of an ancient red algal plastid genome.</title>
        <authorList>
            <person name="Gloeckner G."/>
            <person name="Rosenthal A."/>
            <person name="Valentin K.-U."/>
        </authorList>
    </citation>
    <scope>NUCLEOTIDE SEQUENCE [LARGE SCALE GENOMIC DNA]</scope>
    <source>
        <strain>RK-1</strain>
    </source>
</reference>
<comment type="function">
    <text evidence="1">IGPS catalyzes the conversion of PRFAR and glutamine to IGP, AICAR and glutamate. The HisH subunit catalyzes the hydrolysis of glutamine to glutamate and ammonia as part of the synthesis of IGP and AICAR. The resulting ammonia molecule is channeled to the active site of HisF (By similarity).</text>
</comment>
<comment type="catalytic activity">
    <reaction>
        <text>5-[(5-phospho-1-deoxy-D-ribulos-1-ylimino)methylamino]-1-(5-phospho-beta-D-ribosyl)imidazole-4-carboxamide + L-glutamine = D-erythro-1-(imidazol-4-yl)glycerol 3-phosphate + 5-amino-1-(5-phospho-beta-D-ribosyl)imidazole-4-carboxamide + L-glutamate + H(+)</text>
        <dbReference type="Rhea" id="RHEA:24793"/>
        <dbReference type="ChEBI" id="CHEBI:15378"/>
        <dbReference type="ChEBI" id="CHEBI:29985"/>
        <dbReference type="ChEBI" id="CHEBI:58278"/>
        <dbReference type="ChEBI" id="CHEBI:58359"/>
        <dbReference type="ChEBI" id="CHEBI:58475"/>
        <dbReference type="ChEBI" id="CHEBI:58525"/>
        <dbReference type="EC" id="4.3.2.10"/>
    </reaction>
</comment>
<comment type="catalytic activity">
    <reaction>
        <text>L-glutamine + H2O = L-glutamate + NH4(+)</text>
        <dbReference type="Rhea" id="RHEA:15889"/>
        <dbReference type="ChEBI" id="CHEBI:15377"/>
        <dbReference type="ChEBI" id="CHEBI:28938"/>
        <dbReference type="ChEBI" id="CHEBI:29985"/>
        <dbReference type="ChEBI" id="CHEBI:58359"/>
        <dbReference type="EC" id="3.5.1.2"/>
    </reaction>
</comment>
<comment type="pathway">
    <text>Amino-acid biosynthesis; L-histidine biosynthesis; L-histidine from 5-phospho-alpha-D-ribose 1-diphosphate: step 5/9.</text>
</comment>
<comment type="subunit">
    <text evidence="1">Heterodimer of hisH and hisF.</text>
</comment>
<comment type="subcellular location">
    <subcellularLocation>
        <location>Plastid</location>
        <location>Chloroplast</location>
    </subcellularLocation>
</comment>
<name>HIS5_CYACA</name>
<organism>
    <name type="scientific">Cyanidium caldarium</name>
    <name type="common">Red alga</name>
    <dbReference type="NCBI Taxonomy" id="2771"/>
    <lineage>
        <taxon>Eukaryota</taxon>
        <taxon>Rhodophyta</taxon>
        <taxon>Bangiophyceae</taxon>
        <taxon>Cyanidiales</taxon>
        <taxon>Cyanidiaceae</taxon>
        <taxon>Cyanidium</taxon>
    </lineage>
</organism>
<protein>
    <recommendedName>
        <fullName>Imidazole glycerol phosphate synthase subunit hisH</fullName>
        <ecNumber>4.3.2.10</ecNumber>
    </recommendedName>
    <alternativeName>
        <fullName>IGP synthase glutaminase subunit</fullName>
        <ecNumber>3.5.1.2</ecNumber>
    </alternativeName>
    <alternativeName>
        <fullName>IGP synthase subunit hisH</fullName>
    </alternativeName>
    <alternativeName>
        <fullName>ImGP synthase subunit hisH</fullName>
        <shortName>IGPS subunit hisH</shortName>
    </alternativeName>
</protein>
<proteinExistence type="inferred from homology"/>
<keyword id="KW-0028">Amino-acid biosynthesis</keyword>
<keyword id="KW-0150">Chloroplast</keyword>
<keyword id="KW-0315">Glutamine amidotransferase</keyword>
<keyword id="KW-0368">Histidine biosynthesis</keyword>
<keyword id="KW-0378">Hydrolase</keyword>
<keyword id="KW-0456">Lyase</keyword>
<keyword id="KW-0934">Plastid</keyword>
<dbReference type="EC" id="4.3.2.10"/>
<dbReference type="EC" id="3.5.1.2"/>
<dbReference type="EMBL" id="AF022186">
    <property type="protein sequence ID" value="AAF12883.1"/>
    <property type="molecule type" value="Genomic_DNA"/>
</dbReference>
<dbReference type="RefSeq" id="NP_045211.1">
    <property type="nucleotide sequence ID" value="NC_001840.1"/>
</dbReference>
<dbReference type="SMR" id="Q9TLQ8"/>
<dbReference type="GeneID" id="800113"/>
<dbReference type="UniPathway" id="UPA00031">
    <property type="reaction ID" value="UER00010"/>
</dbReference>
<dbReference type="GO" id="GO:0009507">
    <property type="term" value="C:chloroplast"/>
    <property type="evidence" value="ECO:0007669"/>
    <property type="project" value="UniProtKB-SubCell"/>
</dbReference>
<dbReference type="GO" id="GO:0004359">
    <property type="term" value="F:glutaminase activity"/>
    <property type="evidence" value="ECO:0007669"/>
    <property type="project" value="UniProtKB-EC"/>
</dbReference>
<dbReference type="GO" id="GO:0000107">
    <property type="term" value="F:imidazoleglycerol-phosphate synthase activity"/>
    <property type="evidence" value="ECO:0007669"/>
    <property type="project" value="UniProtKB-UniRule"/>
</dbReference>
<dbReference type="GO" id="GO:0016829">
    <property type="term" value="F:lyase activity"/>
    <property type="evidence" value="ECO:0007669"/>
    <property type="project" value="UniProtKB-KW"/>
</dbReference>
<dbReference type="GO" id="GO:0000105">
    <property type="term" value="P:L-histidine biosynthetic process"/>
    <property type="evidence" value="ECO:0007669"/>
    <property type="project" value="UniProtKB-UniRule"/>
</dbReference>
<dbReference type="CDD" id="cd01748">
    <property type="entry name" value="GATase1_IGP_Synthase"/>
    <property type="match status" value="1"/>
</dbReference>
<dbReference type="Gene3D" id="3.40.50.880">
    <property type="match status" value="1"/>
</dbReference>
<dbReference type="HAMAP" id="MF_00278">
    <property type="entry name" value="HisH"/>
    <property type="match status" value="1"/>
</dbReference>
<dbReference type="InterPro" id="IPR029062">
    <property type="entry name" value="Class_I_gatase-like"/>
</dbReference>
<dbReference type="InterPro" id="IPR017926">
    <property type="entry name" value="GATASE"/>
</dbReference>
<dbReference type="InterPro" id="IPR010139">
    <property type="entry name" value="Imidazole-glycPsynth_HisH"/>
</dbReference>
<dbReference type="NCBIfam" id="TIGR01855">
    <property type="entry name" value="IMP_synth_hisH"/>
    <property type="match status" value="1"/>
</dbReference>
<dbReference type="PANTHER" id="PTHR42701">
    <property type="entry name" value="IMIDAZOLE GLYCEROL PHOSPHATE SYNTHASE SUBUNIT HISH"/>
    <property type="match status" value="1"/>
</dbReference>
<dbReference type="PANTHER" id="PTHR42701:SF1">
    <property type="entry name" value="IMIDAZOLE GLYCEROL PHOSPHATE SYNTHASE SUBUNIT HISH"/>
    <property type="match status" value="1"/>
</dbReference>
<dbReference type="Pfam" id="PF00117">
    <property type="entry name" value="GATase"/>
    <property type="match status" value="1"/>
</dbReference>
<dbReference type="PIRSF" id="PIRSF000495">
    <property type="entry name" value="Amidotransf_hisH"/>
    <property type="match status" value="1"/>
</dbReference>
<dbReference type="SUPFAM" id="SSF52317">
    <property type="entry name" value="Class I glutamine amidotransferase-like"/>
    <property type="match status" value="1"/>
</dbReference>
<dbReference type="PROSITE" id="PS51273">
    <property type="entry name" value="GATASE_TYPE_1"/>
    <property type="match status" value="1"/>
</dbReference>
<gene>
    <name type="primary">hisH</name>
</gene>
<feature type="chain" id="PRO_0000152471" description="Imidazole glycerol phosphate synthase subunit hisH">
    <location>
        <begin position="1"/>
        <end position="214"/>
    </location>
</feature>
<feature type="domain" description="Glutamine amidotransferase type-1">
    <location>
        <begin position="3"/>
        <end position="214"/>
    </location>
</feature>
<feature type="active site" description="Nucleophile" evidence="1">
    <location>
        <position position="83"/>
    </location>
</feature>
<feature type="active site" evidence="1">
    <location>
        <position position="195"/>
    </location>
</feature>
<feature type="active site" evidence="1">
    <location>
        <position position="197"/>
    </location>
</feature>
<sequence length="214" mass="24305">MKNIGIINCGMGNLHSVSNAISNIGFNPVIINASKDLVSFACSALVLPGVGSFDLAIDRLEKKNLIEPVKLWIQEDRPFVGICLGLQLLFEGSDEGSKPGLKIFNGYVSQFKHSLVKKVPHMGWNKLYFNRFNTIDNLVPHYFHYDLQPWAYFVHSYYIEPKDCYTFNTTSLTFYGKQKIVSSISYNNILATQFHPEKSGLFGLFILKRFLSSY</sequence>
<evidence type="ECO:0000250" key="1"/>